<protein>
    <recommendedName>
        <fullName>Acidic phospholipase A2 Cvv-E6f</fullName>
        <shortName>svPLA2</shortName>
        <ecNumber>3.1.1.4</ecNumber>
    </recommendedName>
    <alternativeName>
        <fullName>Phosphatidylcholine 2-acylhydrolase</fullName>
    </alternativeName>
</protein>
<organism>
    <name type="scientific">Crotalus viridis viridis</name>
    <name type="common">Prairie rattlesnake</name>
    <dbReference type="NCBI Taxonomy" id="8742"/>
    <lineage>
        <taxon>Eukaryota</taxon>
        <taxon>Metazoa</taxon>
        <taxon>Chordata</taxon>
        <taxon>Craniata</taxon>
        <taxon>Vertebrata</taxon>
        <taxon>Euteleostomi</taxon>
        <taxon>Lepidosauria</taxon>
        <taxon>Squamata</taxon>
        <taxon>Bifurcata</taxon>
        <taxon>Unidentata</taxon>
        <taxon>Episquamata</taxon>
        <taxon>Toxicofera</taxon>
        <taxon>Serpentes</taxon>
        <taxon>Colubroidea</taxon>
        <taxon>Viperidae</taxon>
        <taxon>Crotalinae</taxon>
        <taxon>Crotalus</taxon>
    </lineage>
</organism>
<sequence length="138" mass="15642">MRTLWIVAVLLLGVEGSLVQFEMMIIKVAKRSGLFWYGAYGCYCGWGGQGRPQDATDRCCFVHDCCYGKATDCNPKTVSYTYSVKNGEIICEDDDPCKKQVCECDRVAAVCFRDNIPSYNNNYKRFPAENCREEPEPC</sequence>
<reference key="1">
    <citation type="journal article" date="2003" name="Arch. Biochem. Biophys.">
        <title>Geographic variations, cloning, and functional analyses of the venom acidic phospholipases A2 of Crotalus viridis viridis.</title>
        <authorList>
            <person name="Tsai I.-H."/>
            <person name="Wang Y.-M."/>
            <person name="Chen Y.-H."/>
            <person name="Tu A.T."/>
        </authorList>
    </citation>
    <scope>NUCLEOTIDE SEQUENCE [MRNA]</scope>
    <scope>PROTEIN SEQUENCE OF 17-39</scope>
    <scope>FUNCTION</scope>
    <scope>COFACTOR</scope>
    <scope>MASS SPECTROMETRY</scope>
    <source>
        <strain>New Mexico</strain>
        <strain>Texas</strain>
        <tissue>Venom</tissue>
        <tissue>Venom gland</tissue>
    </source>
</reference>
<proteinExistence type="evidence at protein level"/>
<keyword id="KW-0106">Calcium</keyword>
<keyword id="KW-0903">Direct protein sequencing</keyword>
<keyword id="KW-1015">Disulfide bond</keyword>
<keyword id="KW-1199">Hemostasis impairing toxin</keyword>
<keyword id="KW-0378">Hydrolase</keyword>
<keyword id="KW-0442">Lipid degradation</keyword>
<keyword id="KW-0443">Lipid metabolism</keyword>
<keyword id="KW-0479">Metal-binding</keyword>
<keyword id="KW-1201">Platelet aggregation inhibiting toxin</keyword>
<keyword id="KW-0964">Secreted</keyword>
<keyword id="KW-0732">Signal</keyword>
<keyword id="KW-0800">Toxin</keyword>
<feature type="signal peptide" evidence="2">
    <location>
        <begin position="1"/>
        <end position="16"/>
    </location>
</feature>
<feature type="chain" id="PRO_0000418558" description="Acidic phospholipase A2 Cvv-E6f">
    <location>
        <begin position="17"/>
        <end position="138"/>
    </location>
</feature>
<feature type="active site" evidence="1">
    <location>
        <position position="63"/>
    </location>
</feature>
<feature type="active site" evidence="1">
    <location>
        <position position="105"/>
    </location>
</feature>
<feature type="binding site" evidence="1">
    <location>
        <position position="43"/>
    </location>
    <ligand>
        <name>Ca(2+)</name>
        <dbReference type="ChEBI" id="CHEBI:29108"/>
    </ligand>
</feature>
<feature type="binding site" evidence="1">
    <location>
        <position position="45"/>
    </location>
    <ligand>
        <name>Ca(2+)</name>
        <dbReference type="ChEBI" id="CHEBI:29108"/>
    </ligand>
</feature>
<feature type="binding site" evidence="1">
    <location>
        <position position="47"/>
    </location>
    <ligand>
        <name>Ca(2+)</name>
        <dbReference type="ChEBI" id="CHEBI:29108"/>
    </ligand>
</feature>
<feature type="binding site" evidence="1">
    <location>
        <position position="64"/>
    </location>
    <ligand>
        <name>Ca(2+)</name>
        <dbReference type="ChEBI" id="CHEBI:29108"/>
    </ligand>
</feature>
<feature type="disulfide bond" evidence="1">
    <location>
        <begin position="42"/>
        <end position="131"/>
    </location>
</feature>
<feature type="disulfide bond" evidence="1">
    <location>
        <begin position="44"/>
        <end position="60"/>
    </location>
</feature>
<feature type="disulfide bond" evidence="1">
    <location>
        <begin position="59"/>
        <end position="111"/>
    </location>
</feature>
<feature type="disulfide bond" evidence="1">
    <location>
        <begin position="65"/>
        <end position="138"/>
    </location>
</feature>
<feature type="disulfide bond" evidence="1">
    <location>
        <begin position="66"/>
        <end position="104"/>
    </location>
</feature>
<feature type="disulfide bond" evidence="1">
    <location>
        <begin position="73"/>
        <end position="97"/>
    </location>
</feature>
<feature type="disulfide bond" evidence="1">
    <location>
        <begin position="91"/>
        <end position="102"/>
    </location>
</feature>
<comment type="function">
    <text evidence="5">Snake venom phospholipase A2 (PLA2) that shows very low inhibition of ADP-induced platelet aggregation in platelet-rich plasma of human, rabbit and guinea pig. In vivo, shows efficient edema-inducing activities in rat paws. PLA2 catalyzes the calcium-dependent hydrolysis of the 2-acyl groups in 3-sn-phosphoglycerides.</text>
</comment>
<comment type="catalytic activity">
    <reaction evidence="3 4">
        <text>a 1,2-diacyl-sn-glycero-3-phosphocholine + H2O = a 1-acyl-sn-glycero-3-phosphocholine + a fatty acid + H(+)</text>
        <dbReference type="Rhea" id="RHEA:15801"/>
        <dbReference type="ChEBI" id="CHEBI:15377"/>
        <dbReference type="ChEBI" id="CHEBI:15378"/>
        <dbReference type="ChEBI" id="CHEBI:28868"/>
        <dbReference type="ChEBI" id="CHEBI:57643"/>
        <dbReference type="ChEBI" id="CHEBI:58168"/>
        <dbReference type="EC" id="3.1.1.4"/>
    </reaction>
</comment>
<comment type="cofactor">
    <cofactor evidence="5">
        <name>Ca(2+)</name>
        <dbReference type="ChEBI" id="CHEBI:29108"/>
    </cofactor>
</comment>
<comment type="subcellular location">
    <subcellularLocation>
        <location>Secreted</location>
    </subcellularLocation>
</comment>
<comment type="tissue specificity">
    <text>Expressed by the venom gland.</text>
</comment>
<comment type="mass spectrometry" mass="13876.0" method="Electrospray" evidence="5"/>
<comment type="similarity">
    <text evidence="6">Belongs to the phospholipase A2 family. Group II subfamily. D49 sub-subfamily.</text>
</comment>
<accession>Q800C3</accession>
<name>PA2AF_CROVV</name>
<evidence type="ECO:0000250" key="1"/>
<evidence type="ECO:0000255" key="2"/>
<evidence type="ECO:0000255" key="3">
    <source>
        <dbReference type="PROSITE-ProRule" id="PRU10035"/>
    </source>
</evidence>
<evidence type="ECO:0000255" key="4">
    <source>
        <dbReference type="PROSITE-ProRule" id="PRU10036"/>
    </source>
</evidence>
<evidence type="ECO:0000269" key="5">
    <source>
    </source>
</evidence>
<evidence type="ECO:0000305" key="6"/>
<dbReference type="EC" id="3.1.1.4"/>
<dbReference type="EMBL" id="AF403135">
    <property type="protein sequence ID" value="AAO93138.1"/>
    <property type="molecule type" value="mRNA"/>
</dbReference>
<dbReference type="SMR" id="Q800C3"/>
<dbReference type="GO" id="GO:0005576">
    <property type="term" value="C:extracellular region"/>
    <property type="evidence" value="ECO:0007669"/>
    <property type="project" value="UniProtKB-SubCell"/>
</dbReference>
<dbReference type="GO" id="GO:0005509">
    <property type="term" value="F:calcium ion binding"/>
    <property type="evidence" value="ECO:0007669"/>
    <property type="project" value="InterPro"/>
</dbReference>
<dbReference type="GO" id="GO:0047498">
    <property type="term" value="F:calcium-dependent phospholipase A2 activity"/>
    <property type="evidence" value="ECO:0007669"/>
    <property type="project" value="TreeGrafter"/>
</dbReference>
<dbReference type="GO" id="GO:0005543">
    <property type="term" value="F:phospholipid binding"/>
    <property type="evidence" value="ECO:0007669"/>
    <property type="project" value="TreeGrafter"/>
</dbReference>
<dbReference type="GO" id="GO:0090729">
    <property type="term" value="F:toxin activity"/>
    <property type="evidence" value="ECO:0007669"/>
    <property type="project" value="UniProtKB-KW"/>
</dbReference>
<dbReference type="GO" id="GO:0050482">
    <property type="term" value="P:arachidonate secretion"/>
    <property type="evidence" value="ECO:0007669"/>
    <property type="project" value="InterPro"/>
</dbReference>
<dbReference type="GO" id="GO:0016042">
    <property type="term" value="P:lipid catabolic process"/>
    <property type="evidence" value="ECO:0007669"/>
    <property type="project" value="UniProtKB-KW"/>
</dbReference>
<dbReference type="GO" id="GO:0042130">
    <property type="term" value="P:negative regulation of T cell proliferation"/>
    <property type="evidence" value="ECO:0007669"/>
    <property type="project" value="TreeGrafter"/>
</dbReference>
<dbReference type="GO" id="GO:0006644">
    <property type="term" value="P:phospholipid metabolic process"/>
    <property type="evidence" value="ECO:0007669"/>
    <property type="project" value="InterPro"/>
</dbReference>
<dbReference type="CDD" id="cd00125">
    <property type="entry name" value="PLA2c"/>
    <property type="match status" value="1"/>
</dbReference>
<dbReference type="FunFam" id="1.20.90.10:FF:000001">
    <property type="entry name" value="Basic phospholipase A2 homolog"/>
    <property type="match status" value="1"/>
</dbReference>
<dbReference type="Gene3D" id="1.20.90.10">
    <property type="entry name" value="Phospholipase A2 domain"/>
    <property type="match status" value="1"/>
</dbReference>
<dbReference type="InterPro" id="IPR001211">
    <property type="entry name" value="PLipase_A2"/>
</dbReference>
<dbReference type="InterPro" id="IPR033112">
    <property type="entry name" value="PLipase_A2_Asp_AS"/>
</dbReference>
<dbReference type="InterPro" id="IPR016090">
    <property type="entry name" value="PLipase_A2_dom"/>
</dbReference>
<dbReference type="InterPro" id="IPR036444">
    <property type="entry name" value="PLipase_A2_dom_sf"/>
</dbReference>
<dbReference type="InterPro" id="IPR033113">
    <property type="entry name" value="PLipase_A2_His_AS"/>
</dbReference>
<dbReference type="PANTHER" id="PTHR11716">
    <property type="entry name" value="PHOSPHOLIPASE A2 FAMILY MEMBER"/>
    <property type="match status" value="1"/>
</dbReference>
<dbReference type="PANTHER" id="PTHR11716:SF9">
    <property type="entry name" value="PHOSPHOLIPASE A2, MEMBRANE ASSOCIATED"/>
    <property type="match status" value="1"/>
</dbReference>
<dbReference type="Pfam" id="PF00068">
    <property type="entry name" value="Phospholip_A2_1"/>
    <property type="match status" value="1"/>
</dbReference>
<dbReference type="PRINTS" id="PR00389">
    <property type="entry name" value="PHPHLIPASEA2"/>
</dbReference>
<dbReference type="SMART" id="SM00085">
    <property type="entry name" value="PA2c"/>
    <property type="match status" value="1"/>
</dbReference>
<dbReference type="SUPFAM" id="SSF48619">
    <property type="entry name" value="Phospholipase A2, PLA2"/>
    <property type="match status" value="1"/>
</dbReference>
<dbReference type="PROSITE" id="PS00119">
    <property type="entry name" value="PA2_ASP"/>
    <property type="match status" value="1"/>
</dbReference>
<dbReference type="PROSITE" id="PS00118">
    <property type="entry name" value="PA2_HIS"/>
    <property type="match status" value="1"/>
</dbReference>